<evidence type="ECO:0000255" key="1">
    <source>
        <dbReference type="HAMAP-Rule" id="MF_00500"/>
    </source>
</evidence>
<evidence type="ECO:0000256" key="2">
    <source>
        <dbReference type="SAM" id="MobiDB-lite"/>
    </source>
</evidence>
<evidence type="ECO:0000305" key="3"/>
<gene>
    <name evidence="1" type="primary">rpsT</name>
    <name type="ordered locus">CT0261</name>
</gene>
<accession>Q8KFR1</accession>
<organism>
    <name type="scientific">Chlorobaculum tepidum (strain ATCC 49652 / DSM 12025 / NBRC 103806 / TLS)</name>
    <name type="common">Chlorobium tepidum</name>
    <dbReference type="NCBI Taxonomy" id="194439"/>
    <lineage>
        <taxon>Bacteria</taxon>
        <taxon>Pseudomonadati</taxon>
        <taxon>Chlorobiota</taxon>
        <taxon>Chlorobiia</taxon>
        <taxon>Chlorobiales</taxon>
        <taxon>Chlorobiaceae</taxon>
        <taxon>Chlorobaculum</taxon>
    </lineage>
</organism>
<reference key="1">
    <citation type="journal article" date="2002" name="Proc. Natl. Acad. Sci. U.S.A.">
        <title>The complete genome sequence of Chlorobium tepidum TLS, a photosynthetic, anaerobic, green-sulfur bacterium.</title>
        <authorList>
            <person name="Eisen J.A."/>
            <person name="Nelson K.E."/>
            <person name="Paulsen I.T."/>
            <person name="Heidelberg J.F."/>
            <person name="Wu M."/>
            <person name="Dodson R.J."/>
            <person name="DeBoy R.T."/>
            <person name="Gwinn M.L."/>
            <person name="Nelson W.C."/>
            <person name="Haft D.H."/>
            <person name="Hickey E.K."/>
            <person name="Peterson J.D."/>
            <person name="Durkin A.S."/>
            <person name="Kolonay J.F."/>
            <person name="Yang F."/>
            <person name="Holt I.E."/>
            <person name="Umayam L.A."/>
            <person name="Mason T.M."/>
            <person name="Brenner M."/>
            <person name="Shea T.P."/>
            <person name="Parksey D.S."/>
            <person name="Nierman W.C."/>
            <person name="Feldblyum T.V."/>
            <person name="Hansen C.L."/>
            <person name="Craven M.B."/>
            <person name="Radune D."/>
            <person name="Vamathevan J.J."/>
            <person name="Khouri H.M."/>
            <person name="White O."/>
            <person name="Gruber T.M."/>
            <person name="Ketchum K.A."/>
            <person name="Venter J.C."/>
            <person name="Tettelin H."/>
            <person name="Bryant D.A."/>
            <person name="Fraser C.M."/>
        </authorList>
    </citation>
    <scope>NUCLEOTIDE SEQUENCE [LARGE SCALE GENOMIC DNA]</scope>
    <source>
        <strain>ATCC 49652 / DSM 12025 / NBRC 103806 / TLS</strain>
    </source>
</reference>
<feature type="chain" id="PRO_0000167946" description="Small ribosomal subunit protein bS20">
    <location>
        <begin position="1"/>
        <end position="92"/>
    </location>
</feature>
<feature type="region of interest" description="Disordered" evidence="2">
    <location>
        <begin position="1"/>
        <end position="26"/>
    </location>
</feature>
<feature type="region of interest" description="Disordered" evidence="2">
    <location>
        <begin position="73"/>
        <end position="92"/>
    </location>
</feature>
<feature type="compositionally biased region" description="Basic and acidic residues" evidence="2">
    <location>
        <begin position="1"/>
        <end position="21"/>
    </location>
</feature>
<feature type="compositionally biased region" description="Polar residues" evidence="2">
    <location>
        <begin position="82"/>
        <end position="92"/>
    </location>
</feature>
<sequence>MPLHKSAEKRLRQAARRNERNRARKKELKGVLKNMQKLIDANAAKSEVEAAYKAAVQKLDRLGVKRYIHPNKASRKKAQLTKALNNYTPTAS</sequence>
<keyword id="KW-1185">Reference proteome</keyword>
<keyword id="KW-0687">Ribonucleoprotein</keyword>
<keyword id="KW-0689">Ribosomal protein</keyword>
<keyword id="KW-0694">RNA-binding</keyword>
<keyword id="KW-0699">rRNA-binding</keyword>
<protein>
    <recommendedName>
        <fullName evidence="1">Small ribosomal subunit protein bS20</fullName>
    </recommendedName>
    <alternativeName>
        <fullName evidence="3">30S ribosomal protein S20</fullName>
    </alternativeName>
</protein>
<proteinExistence type="inferred from homology"/>
<comment type="function">
    <text evidence="1">Binds directly to 16S ribosomal RNA.</text>
</comment>
<comment type="similarity">
    <text evidence="1">Belongs to the bacterial ribosomal protein bS20 family.</text>
</comment>
<dbReference type="EMBL" id="AE006470">
    <property type="protein sequence ID" value="AAM71507.1"/>
    <property type="molecule type" value="Genomic_DNA"/>
</dbReference>
<dbReference type="RefSeq" id="NP_661165.1">
    <property type="nucleotide sequence ID" value="NC_002932.3"/>
</dbReference>
<dbReference type="RefSeq" id="WP_010931953.1">
    <property type="nucleotide sequence ID" value="NC_002932.3"/>
</dbReference>
<dbReference type="SMR" id="Q8KFR1"/>
<dbReference type="STRING" id="194439.CT0261"/>
<dbReference type="EnsemblBacteria" id="AAM71507">
    <property type="protein sequence ID" value="AAM71507"/>
    <property type="gene ID" value="CT0261"/>
</dbReference>
<dbReference type="KEGG" id="cte:CT0261"/>
<dbReference type="PATRIC" id="fig|194439.7.peg.253"/>
<dbReference type="eggNOG" id="COG0268">
    <property type="taxonomic scope" value="Bacteria"/>
</dbReference>
<dbReference type="HOGENOM" id="CLU_160655_3_1_10"/>
<dbReference type="OrthoDB" id="9808392at2"/>
<dbReference type="Proteomes" id="UP000001007">
    <property type="component" value="Chromosome"/>
</dbReference>
<dbReference type="GO" id="GO:0005829">
    <property type="term" value="C:cytosol"/>
    <property type="evidence" value="ECO:0007669"/>
    <property type="project" value="TreeGrafter"/>
</dbReference>
<dbReference type="GO" id="GO:0015935">
    <property type="term" value="C:small ribosomal subunit"/>
    <property type="evidence" value="ECO:0007669"/>
    <property type="project" value="TreeGrafter"/>
</dbReference>
<dbReference type="GO" id="GO:0070181">
    <property type="term" value="F:small ribosomal subunit rRNA binding"/>
    <property type="evidence" value="ECO:0007669"/>
    <property type="project" value="TreeGrafter"/>
</dbReference>
<dbReference type="GO" id="GO:0003735">
    <property type="term" value="F:structural constituent of ribosome"/>
    <property type="evidence" value="ECO:0007669"/>
    <property type="project" value="InterPro"/>
</dbReference>
<dbReference type="GO" id="GO:0006412">
    <property type="term" value="P:translation"/>
    <property type="evidence" value="ECO:0007669"/>
    <property type="project" value="UniProtKB-UniRule"/>
</dbReference>
<dbReference type="Gene3D" id="1.20.58.110">
    <property type="entry name" value="Ribosomal protein S20"/>
    <property type="match status" value="1"/>
</dbReference>
<dbReference type="HAMAP" id="MF_00500">
    <property type="entry name" value="Ribosomal_bS20"/>
    <property type="match status" value="1"/>
</dbReference>
<dbReference type="InterPro" id="IPR002583">
    <property type="entry name" value="Ribosomal_bS20"/>
</dbReference>
<dbReference type="InterPro" id="IPR036510">
    <property type="entry name" value="Ribosomal_bS20_sf"/>
</dbReference>
<dbReference type="NCBIfam" id="TIGR00029">
    <property type="entry name" value="S20"/>
    <property type="match status" value="1"/>
</dbReference>
<dbReference type="PANTHER" id="PTHR33398">
    <property type="entry name" value="30S RIBOSOMAL PROTEIN S20"/>
    <property type="match status" value="1"/>
</dbReference>
<dbReference type="PANTHER" id="PTHR33398:SF1">
    <property type="entry name" value="SMALL RIBOSOMAL SUBUNIT PROTEIN BS20C"/>
    <property type="match status" value="1"/>
</dbReference>
<dbReference type="Pfam" id="PF01649">
    <property type="entry name" value="Ribosomal_S20p"/>
    <property type="match status" value="1"/>
</dbReference>
<dbReference type="SUPFAM" id="SSF46992">
    <property type="entry name" value="Ribosomal protein S20"/>
    <property type="match status" value="1"/>
</dbReference>
<name>RS20_CHLTE</name>